<name>PXMT2_ARATH</name>
<feature type="chain" id="PRO_0000440975" description="Paraxanthine methyltransferase 2">
    <location>
        <begin position="1"/>
        <end position="353"/>
    </location>
</feature>
<feature type="binding site" evidence="2">
    <location>
        <position position="18"/>
    </location>
    <ligand>
        <name>S-adenosyl-L-methionine</name>
        <dbReference type="ChEBI" id="CHEBI:59789"/>
    </ligand>
</feature>
<feature type="binding site" evidence="2">
    <location>
        <position position="18"/>
    </location>
    <ligand>
        <name>substrate</name>
    </ligand>
</feature>
<feature type="binding site" evidence="1">
    <location>
        <begin position="21"/>
        <end position="25"/>
    </location>
    <ligand>
        <name>substrate</name>
    </ligand>
</feature>
<feature type="binding site" evidence="3">
    <location>
        <begin position="59"/>
        <end position="60"/>
    </location>
    <ligand>
        <name>S-adenosyl-L-methionine</name>
        <dbReference type="ChEBI" id="CHEBI:59789"/>
    </ligand>
</feature>
<feature type="binding site" evidence="1">
    <location>
        <position position="59"/>
    </location>
    <ligand>
        <name>S-adenosyl-L-methionine</name>
        <dbReference type="ChEBI" id="CHEBI:59789"/>
    </ligand>
</feature>
<feature type="binding site" evidence="2">
    <location>
        <position position="65"/>
    </location>
    <ligand>
        <name>S-adenosyl-L-methionine</name>
        <dbReference type="ChEBI" id="CHEBI:59789"/>
    </ligand>
</feature>
<feature type="binding site" evidence="2">
    <location>
        <begin position="99"/>
        <end position="102"/>
    </location>
    <ligand>
        <name>S-adenosyl-L-methionine</name>
        <dbReference type="ChEBI" id="CHEBI:59789"/>
    </ligand>
</feature>
<feature type="binding site" evidence="3">
    <location>
        <begin position="128"/>
        <end position="130"/>
    </location>
    <ligand>
        <name>S-adenosyl-L-methionine</name>
        <dbReference type="ChEBI" id="CHEBI:59789"/>
    </ligand>
</feature>
<feature type="binding site" evidence="3">
    <location>
        <begin position="145"/>
        <end position="147"/>
    </location>
    <ligand>
        <name>S-adenosyl-L-methionine</name>
        <dbReference type="ChEBI" id="CHEBI:59789"/>
    </ligand>
</feature>
<feature type="binding site" evidence="2">
    <location>
        <begin position="146"/>
        <end position="150"/>
    </location>
    <ligand>
        <name>substrate</name>
    </ligand>
</feature>
<feature type="binding site" evidence="3">
    <location>
        <position position="167"/>
    </location>
    <ligand>
        <name>Mg(2+)</name>
        <dbReference type="ChEBI" id="CHEBI:18420"/>
    </ligand>
</feature>
<feature type="binding site" evidence="3">
    <location>
        <position position="252"/>
    </location>
    <ligand>
        <name>Mg(2+)</name>
        <dbReference type="ChEBI" id="CHEBI:18420"/>
    </ligand>
</feature>
<feature type="binding site" evidence="3">
    <location>
        <position position="254"/>
    </location>
    <ligand>
        <name>Mg(2+)</name>
        <dbReference type="ChEBI" id="CHEBI:18420"/>
    </ligand>
</feature>
<feature type="binding site" evidence="1">
    <location>
        <position position="301"/>
    </location>
    <ligand>
        <name>substrate</name>
    </ligand>
</feature>
<feature type="binding site" evidence="1">
    <location>
        <position position="306"/>
    </location>
    <ligand>
        <name>substrate</name>
    </ligand>
</feature>
<protein>
    <recommendedName>
        <fullName>Paraxanthine methyltransferase 2</fullName>
        <ecNumber evidence="5">2.1.1.-</ecNumber>
    </recommendedName>
    <alternativeName>
        <fullName evidence="5">SABATH methyltransferase PXMT2</fullName>
    </alternativeName>
</protein>
<comment type="cofactor">
    <cofactor evidence="3">
        <name>Mg(2+)</name>
        <dbReference type="ChEBI" id="CHEBI:18420"/>
    </cofactor>
    <text evidence="3">Binds 1 Mg(2+) ion per subunit.</text>
</comment>
<comment type="subunit">
    <text evidence="3">Homodimer.</text>
</comment>
<comment type="induction">
    <text evidence="4">Induced in the presence of the herbivory P.xylostella larvae.</text>
</comment>
<comment type="similarity">
    <text evidence="5">Belongs to the methyltransferase superfamily. SABATH family.</text>
</comment>
<accession>Q9C9M2</accession>
<proteinExistence type="evidence at transcript level"/>
<evidence type="ECO:0000250" key="1">
    <source>
        <dbReference type="UniProtKB" id="A4GE69"/>
    </source>
</evidence>
<evidence type="ECO:0000250" key="2">
    <source>
        <dbReference type="UniProtKB" id="A4GE70"/>
    </source>
</evidence>
<evidence type="ECO:0000250" key="3">
    <source>
        <dbReference type="UniProtKB" id="Q9FLN8"/>
    </source>
</evidence>
<evidence type="ECO:0000269" key="4">
    <source>
    </source>
</evidence>
<evidence type="ECO:0000305" key="5"/>
<evidence type="ECO:0000312" key="6">
    <source>
        <dbReference type="Araport" id="AT1G66690"/>
    </source>
</evidence>
<evidence type="ECO:0000312" key="7">
    <source>
        <dbReference type="EMBL" id="AAG60089.1"/>
    </source>
</evidence>
<keyword id="KW-0460">Magnesium</keyword>
<keyword id="KW-0479">Metal-binding</keyword>
<keyword id="KW-0489">Methyltransferase</keyword>
<keyword id="KW-1185">Reference proteome</keyword>
<keyword id="KW-0949">S-adenosyl-L-methionine</keyword>
<keyword id="KW-0808">Transferase</keyword>
<sequence length="353" mass="39923">MTTTQDWIMIGGYGPESYNQQSSYQRALLEAAKDKMTEAISANLDLDLISNRFIVADFGCASGPNTFVAVQNIIDAVEEKYLRETGQNPEDNIEFQVLFNDLRINDFNTLFQTLPPGRRYFSAGVPGSFFNRVLPKQSFHIAVMSYAFLFTSKIPKGIMDRDSPLWNKDMQCTGFNPAVKKAYLEQYSIDTKNLLDARAEELMPGGLMLLLGSCMRDGVKMSETLKGTVMDFIGESLNDLAQKGVTEQEKVDTFKTSIYFAEQGEIRQIIEENGKFTIEAFEDIIHSKNEFPLDPKTLAISFKALYGAFISAHFGIEVMRKAFELVEVKAREQISRLHKVKPGMQYLIVLRKN</sequence>
<organism>
    <name type="scientific">Arabidopsis thaliana</name>
    <name type="common">Mouse-ear cress</name>
    <dbReference type="NCBI Taxonomy" id="3702"/>
    <lineage>
        <taxon>Eukaryota</taxon>
        <taxon>Viridiplantae</taxon>
        <taxon>Streptophyta</taxon>
        <taxon>Embryophyta</taxon>
        <taxon>Tracheophyta</taxon>
        <taxon>Spermatophyta</taxon>
        <taxon>Magnoliopsida</taxon>
        <taxon>eudicotyledons</taxon>
        <taxon>Gunneridae</taxon>
        <taxon>Pentapetalae</taxon>
        <taxon>rosids</taxon>
        <taxon>malvids</taxon>
        <taxon>Brassicales</taxon>
        <taxon>Brassicaceae</taxon>
        <taxon>Camelineae</taxon>
        <taxon>Arabidopsis</taxon>
    </lineage>
</organism>
<reference key="1">
    <citation type="journal article" date="2000" name="Nature">
        <title>Sequence and analysis of chromosome 1 of the plant Arabidopsis thaliana.</title>
        <authorList>
            <person name="Theologis A."/>
            <person name="Ecker J.R."/>
            <person name="Palm C.J."/>
            <person name="Federspiel N.A."/>
            <person name="Kaul S."/>
            <person name="White O."/>
            <person name="Alonso J."/>
            <person name="Altafi H."/>
            <person name="Araujo R."/>
            <person name="Bowman C.L."/>
            <person name="Brooks S.Y."/>
            <person name="Buehler E."/>
            <person name="Chan A."/>
            <person name="Chao Q."/>
            <person name="Chen H."/>
            <person name="Cheuk R.F."/>
            <person name="Chin C.W."/>
            <person name="Chung M.K."/>
            <person name="Conn L."/>
            <person name="Conway A.B."/>
            <person name="Conway A.R."/>
            <person name="Creasy T.H."/>
            <person name="Dewar K."/>
            <person name="Dunn P."/>
            <person name="Etgu P."/>
            <person name="Feldblyum T.V."/>
            <person name="Feng J.-D."/>
            <person name="Fong B."/>
            <person name="Fujii C.Y."/>
            <person name="Gill J.E."/>
            <person name="Goldsmith A.D."/>
            <person name="Haas B."/>
            <person name="Hansen N.F."/>
            <person name="Hughes B."/>
            <person name="Huizar L."/>
            <person name="Hunter J.L."/>
            <person name="Jenkins J."/>
            <person name="Johnson-Hopson C."/>
            <person name="Khan S."/>
            <person name="Khaykin E."/>
            <person name="Kim C.J."/>
            <person name="Koo H.L."/>
            <person name="Kremenetskaia I."/>
            <person name="Kurtz D.B."/>
            <person name="Kwan A."/>
            <person name="Lam B."/>
            <person name="Langin-Hooper S."/>
            <person name="Lee A."/>
            <person name="Lee J.M."/>
            <person name="Lenz C.A."/>
            <person name="Li J.H."/>
            <person name="Li Y.-P."/>
            <person name="Lin X."/>
            <person name="Liu S.X."/>
            <person name="Liu Z.A."/>
            <person name="Luros J.S."/>
            <person name="Maiti R."/>
            <person name="Marziali A."/>
            <person name="Militscher J."/>
            <person name="Miranda M."/>
            <person name="Nguyen M."/>
            <person name="Nierman W.C."/>
            <person name="Osborne B.I."/>
            <person name="Pai G."/>
            <person name="Peterson J."/>
            <person name="Pham P.K."/>
            <person name="Rizzo M."/>
            <person name="Rooney T."/>
            <person name="Rowley D."/>
            <person name="Sakano H."/>
            <person name="Salzberg S.L."/>
            <person name="Schwartz J.R."/>
            <person name="Shinn P."/>
            <person name="Southwick A.M."/>
            <person name="Sun H."/>
            <person name="Tallon L.J."/>
            <person name="Tambunga G."/>
            <person name="Toriumi M.J."/>
            <person name="Town C.D."/>
            <person name="Utterback T."/>
            <person name="Van Aken S."/>
            <person name="Vaysberg M."/>
            <person name="Vysotskaia V.S."/>
            <person name="Walker M."/>
            <person name="Wu D."/>
            <person name="Yu G."/>
            <person name="Fraser C.M."/>
            <person name="Venter J.C."/>
            <person name="Davis R.W."/>
        </authorList>
    </citation>
    <scope>NUCLEOTIDE SEQUENCE [LARGE SCALE GENOMIC DNA]</scope>
    <source>
        <strain>cv. Columbia</strain>
    </source>
</reference>
<reference key="2">
    <citation type="journal article" date="2017" name="Plant J.">
        <title>Araport11: a complete reannotation of the Arabidopsis thaliana reference genome.</title>
        <authorList>
            <person name="Cheng C.Y."/>
            <person name="Krishnakumar V."/>
            <person name="Chan A.P."/>
            <person name="Thibaud-Nissen F."/>
            <person name="Schobel S."/>
            <person name="Town C.D."/>
        </authorList>
    </citation>
    <scope>GENOME REANNOTATION</scope>
    <source>
        <strain>cv. Columbia</strain>
    </source>
</reference>
<reference key="3">
    <citation type="journal article" date="2003" name="Plant J.">
        <title>An Arabidopsis thaliana gene for methylsalicylate biosynthesis, identified by a biochemical genomics approach, has a role in defense.</title>
        <authorList>
            <person name="Chen F."/>
            <person name="D'Auria J.C."/>
            <person name="Tholl D."/>
            <person name="Ross J.R."/>
            <person name="Gershenzon J."/>
            <person name="Noel J.P."/>
            <person name="Pichersky E."/>
        </authorList>
    </citation>
    <scope>INDUCTION BY HERBIVORY</scope>
    <scope>GENE FAMILY</scope>
    <source>
        <strain>cv. Columbia</strain>
    </source>
</reference>
<gene>
    <name evidence="6" type="ordered locus">At1g66690</name>
    <name evidence="7" type="ORF">F4N21.17</name>
</gene>
<dbReference type="EC" id="2.1.1.-" evidence="5"/>
<dbReference type="EMBL" id="AC013288">
    <property type="protein sequence ID" value="AAG60089.1"/>
    <property type="molecule type" value="Genomic_DNA"/>
</dbReference>
<dbReference type="EMBL" id="CP002684">
    <property type="protein sequence ID" value="AEE34545.1"/>
    <property type="molecule type" value="Genomic_DNA"/>
</dbReference>
<dbReference type="RefSeq" id="NP_176842.1">
    <property type="nucleotide sequence ID" value="NM_105340.2"/>
</dbReference>
<dbReference type="SMR" id="Q9C9M2"/>
<dbReference type="STRING" id="3702.Q9C9M2"/>
<dbReference type="iPTMnet" id="Q9C9M2"/>
<dbReference type="PaxDb" id="3702-AT1G66690.1"/>
<dbReference type="ProteomicsDB" id="226463"/>
<dbReference type="EnsemblPlants" id="AT1G66690.1">
    <property type="protein sequence ID" value="AT1G66690.1"/>
    <property type="gene ID" value="AT1G66690"/>
</dbReference>
<dbReference type="GeneID" id="842987"/>
<dbReference type="Gramene" id="AT1G66690.1">
    <property type="protein sequence ID" value="AT1G66690.1"/>
    <property type="gene ID" value="AT1G66690"/>
</dbReference>
<dbReference type="KEGG" id="ath:AT1G66690"/>
<dbReference type="Araport" id="AT1G66690"/>
<dbReference type="TAIR" id="AT1G66690"/>
<dbReference type="eggNOG" id="ENOG502QUIN">
    <property type="taxonomic scope" value="Eukaryota"/>
</dbReference>
<dbReference type="HOGENOM" id="CLU_019628_1_0_1"/>
<dbReference type="InParanoid" id="Q9C9M2"/>
<dbReference type="OMA" id="RINDFNT"/>
<dbReference type="PhylomeDB" id="Q9C9M2"/>
<dbReference type="BioCyc" id="ARA:AT1G66690-MONOMER"/>
<dbReference type="PRO" id="PR:Q9C9M2"/>
<dbReference type="Proteomes" id="UP000006548">
    <property type="component" value="Chromosome 1"/>
</dbReference>
<dbReference type="ExpressionAtlas" id="Q9C9M2">
    <property type="expression patterns" value="baseline and differential"/>
</dbReference>
<dbReference type="GO" id="GO:0046872">
    <property type="term" value="F:metal ion binding"/>
    <property type="evidence" value="ECO:0007669"/>
    <property type="project" value="UniProtKB-KW"/>
</dbReference>
<dbReference type="GO" id="GO:0008168">
    <property type="term" value="F:methyltransferase activity"/>
    <property type="evidence" value="ECO:0007669"/>
    <property type="project" value="UniProtKB-KW"/>
</dbReference>
<dbReference type="GO" id="GO:0032259">
    <property type="term" value="P:methylation"/>
    <property type="evidence" value="ECO:0007669"/>
    <property type="project" value="UniProtKB-KW"/>
</dbReference>
<dbReference type="GO" id="GO:0080027">
    <property type="term" value="P:response to herbivore"/>
    <property type="evidence" value="ECO:0000270"/>
    <property type="project" value="UniProtKB"/>
</dbReference>
<dbReference type="Gene3D" id="1.10.1200.270">
    <property type="entry name" value="Methyltransferase, alpha-helical capping domain"/>
    <property type="match status" value="1"/>
</dbReference>
<dbReference type="Gene3D" id="3.40.50.150">
    <property type="entry name" value="Vaccinia Virus protein VP39"/>
    <property type="match status" value="1"/>
</dbReference>
<dbReference type="InterPro" id="IPR005299">
    <property type="entry name" value="MeTrfase_7"/>
</dbReference>
<dbReference type="InterPro" id="IPR042086">
    <property type="entry name" value="MeTrfase_capping"/>
</dbReference>
<dbReference type="InterPro" id="IPR029063">
    <property type="entry name" value="SAM-dependent_MTases_sf"/>
</dbReference>
<dbReference type="PANTHER" id="PTHR31009">
    <property type="entry name" value="S-ADENOSYL-L-METHIONINE:CARBOXYL METHYLTRANSFERASE FAMILY PROTEIN"/>
    <property type="match status" value="1"/>
</dbReference>
<dbReference type="Pfam" id="PF03492">
    <property type="entry name" value="Methyltransf_7"/>
    <property type="match status" value="1"/>
</dbReference>
<dbReference type="SUPFAM" id="SSF53335">
    <property type="entry name" value="S-adenosyl-L-methionine-dependent methyltransferases"/>
    <property type="match status" value="1"/>
</dbReference>